<gene>
    <name type="primary">KRBOX1</name>
</gene>
<keyword id="KW-0025">Alternative splicing</keyword>
<keyword id="KW-1267">Proteomics identification</keyword>
<keyword id="KW-1185">Reference proteome</keyword>
<comment type="alternative products">
    <event type="alternative splicing"/>
    <isoform>
        <id>C9JBD0-1</id>
        <name>1</name>
        <sequence type="displayed"/>
    </isoform>
    <isoform>
        <id>C9JBD0-2</id>
        <name>2</name>
        <sequence type="described" ref="VSP_040580"/>
    </isoform>
</comment>
<name>KRBX1_HUMAN</name>
<accession>C9JBD0</accession>
<accession>B4DJE8</accession>
<protein>
    <recommendedName>
        <fullName>KRAB domain-containing protein 1</fullName>
    </recommendedName>
</protein>
<reference key="1">
    <citation type="journal article" date="2004" name="Nat. Genet.">
        <title>Complete sequencing and characterization of 21,243 full-length human cDNAs.</title>
        <authorList>
            <person name="Ota T."/>
            <person name="Suzuki Y."/>
            <person name="Nishikawa T."/>
            <person name="Otsuki T."/>
            <person name="Sugiyama T."/>
            <person name="Irie R."/>
            <person name="Wakamatsu A."/>
            <person name="Hayashi K."/>
            <person name="Sato H."/>
            <person name="Nagai K."/>
            <person name="Kimura K."/>
            <person name="Makita H."/>
            <person name="Sekine M."/>
            <person name="Obayashi M."/>
            <person name="Nishi T."/>
            <person name="Shibahara T."/>
            <person name="Tanaka T."/>
            <person name="Ishii S."/>
            <person name="Yamamoto J."/>
            <person name="Saito K."/>
            <person name="Kawai Y."/>
            <person name="Isono Y."/>
            <person name="Nakamura Y."/>
            <person name="Nagahari K."/>
            <person name="Murakami K."/>
            <person name="Yasuda T."/>
            <person name="Iwayanagi T."/>
            <person name="Wagatsuma M."/>
            <person name="Shiratori A."/>
            <person name="Sudo H."/>
            <person name="Hosoiri T."/>
            <person name="Kaku Y."/>
            <person name="Kodaira H."/>
            <person name="Kondo H."/>
            <person name="Sugawara M."/>
            <person name="Takahashi M."/>
            <person name="Kanda K."/>
            <person name="Yokoi T."/>
            <person name="Furuya T."/>
            <person name="Kikkawa E."/>
            <person name="Omura Y."/>
            <person name="Abe K."/>
            <person name="Kamihara K."/>
            <person name="Katsuta N."/>
            <person name="Sato K."/>
            <person name="Tanikawa M."/>
            <person name="Yamazaki M."/>
            <person name="Ninomiya K."/>
            <person name="Ishibashi T."/>
            <person name="Yamashita H."/>
            <person name="Murakawa K."/>
            <person name="Fujimori K."/>
            <person name="Tanai H."/>
            <person name="Kimata M."/>
            <person name="Watanabe M."/>
            <person name="Hiraoka S."/>
            <person name="Chiba Y."/>
            <person name="Ishida S."/>
            <person name="Ono Y."/>
            <person name="Takiguchi S."/>
            <person name="Watanabe S."/>
            <person name="Yosida M."/>
            <person name="Hotuta T."/>
            <person name="Kusano J."/>
            <person name="Kanehori K."/>
            <person name="Takahashi-Fujii A."/>
            <person name="Hara H."/>
            <person name="Tanase T.-O."/>
            <person name="Nomura Y."/>
            <person name="Togiya S."/>
            <person name="Komai F."/>
            <person name="Hara R."/>
            <person name="Takeuchi K."/>
            <person name="Arita M."/>
            <person name="Imose N."/>
            <person name="Musashino K."/>
            <person name="Yuuki H."/>
            <person name="Oshima A."/>
            <person name="Sasaki N."/>
            <person name="Aotsuka S."/>
            <person name="Yoshikawa Y."/>
            <person name="Matsunawa H."/>
            <person name="Ichihara T."/>
            <person name="Shiohata N."/>
            <person name="Sano S."/>
            <person name="Moriya S."/>
            <person name="Momiyama H."/>
            <person name="Satoh N."/>
            <person name="Takami S."/>
            <person name="Terashima Y."/>
            <person name="Suzuki O."/>
            <person name="Nakagawa S."/>
            <person name="Senoh A."/>
            <person name="Mizoguchi H."/>
            <person name="Goto Y."/>
            <person name="Shimizu F."/>
            <person name="Wakebe H."/>
            <person name="Hishigaki H."/>
            <person name="Watanabe T."/>
            <person name="Sugiyama A."/>
            <person name="Takemoto M."/>
            <person name="Kawakami B."/>
            <person name="Yamazaki M."/>
            <person name="Watanabe K."/>
            <person name="Kumagai A."/>
            <person name="Itakura S."/>
            <person name="Fukuzumi Y."/>
            <person name="Fujimori Y."/>
            <person name="Komiyama M."/>
            <person name="Tashiro H."/>
            <person name="Tanigami A."/>
            <person name="Fujiwara T."/>
            <person name="Ono T."/>
            <person name="Yamada K."/>
            <person name="Fujii Y."/>
            <person name="Ozaki K."/>
            <person name="Hirao M."/>
            <person name="Ohmori Y."/>
            <person name="Kawabata A."/>
            <person name="Hikiji T."/>
            <person name="Kobatake N."/>
            <person name="Inagaki H."/>
            <person name="Ikema Y."/>
            <person name="Okamoto S."/>
            <person name="Okitani R."/>
            <person name="Kawakami T."/>
            <person name="Noguchi S."/>
            <person name="Itoh T."/>
            <person name="Shigeta K."/>
            <person name="Senba T."/>
            <person name="Matsumura K."/>
            <person name="Nakajima Y."/>
            <person name="Mizuno T."/>
            <person name="Morinaga M."/>
            <person name="Sasaki M."/>
            <person name="Togashi T."/>
            <person name="Oyama M."/>
            <person name="Hata H."/>
            <person name="Watanabe M."/>
            <person name="Komatsu T."/>
            <person name="Mizushima-Sugano J."/>
            <person name="Satoh T."/>
            <person name="Shirai Y."/>
            <person name="Takahashi Y."/>
            <person name="Nakagawa K."/>
            <person name="Okumura K."/>
            <person name="Nagase T."/>
            <person name="Nomura N."/>
            <person name="Kikuchi H."/>
            <person name="Masuho Y."/>
            <person name="Yamashita R."/>
            <person name="Nakai K."/>
            <person name="Yada T."/>
            <person name="Nakamura Y."/>
            <person name="Ohara O."/>
            <person name="Isogai T."/>
            <person name="Sugano S."/>
        </authorList>
    </citation>
    <scope>NUCLEOTIDE SEQUENCE [LARGE SCALE MRNA] (ISOFORM 2)</scope>
    <source>
        <tissue>Subthalamic nucleus</tissue>
    </source>
</reference>
<reference key="2">
    <citation type="journal article" date="2006" name="Nature">
        <title>The DNA sequence, annotation and analysis of human chromosome 3.</title>
        <authorList>
            <person name="Muzny D.M."/>
            <person name="Scherer S.E."/>
            <person name="Kaul R."/>
            <person name="Wang J."/>
            <person name="Yu J."/>
            <person name="Sudbrak R."/>
            <person name="Buhay C.J."/>
            <person name="Chen R."/>
            <person name="Cree A."/>
            <person name="Ding Y."/>
            <person name="Dugan-Rocha S."/>
            <person name="Gill R."/>
            <person name="Gunaratne P."/>
            <person name="Harris R.A."/>
            <person name="Hawes A.C."/>
            <person name="Hernandez J."/>
            <person name="Hodgson A.V."/>
            <person name="Hume J."/>
            <person name="Jackson A."/>
            <person name="Khan Z.M."/>
            <person name="Kovar-Smith C."/>
            <person name="Lewis L.R."/>
            <person name="Lozado R.J."/>
            <person name="Metzker M.L."/>
            <person name="Milosavljevic A."/>
            <person name="Miner G.R."/>
            <person name="Morgan M.B."/>
            <person name="Nazareth L.V."/>
            <person name="Scott G."/>
            <person name="Sodergren E."/>
            <person name="Song X.-Z."/>
            <person name="Steffen D."/>
            <person name="Wei S."/>
            <person name="Wheeler D.A."/>
            <person name="Wright M.W."/>
            <person name="Worley K.C."/>
            <person name="Yuan Y."/>
            <person name="Zhang Z."/>
            <person name="Adams C.Q."/>
            <person name="Ansari-Lari M.A."/>
            <person name="Ayele M."/>
            <person name="Brown M.J."/>
            <person name="Chen G."/>
            <person name="Chen Z."/>
            <person name="Clendenning J."/>
            <person name="Clerc-Blankenburg K.P."/>
            <person name="Chen R."/>
            <person name="Chen Z."/>
            <person name="Davis C."/>
            <person name="Delgado O."/>
            <person name="Dinh H.H."/>
            <person name="Dong W."/>
            <person name="Draper H."/>
            <person name="Ernst S."/>
            <person name="Fu G."/>
            <person name="Gonzalez-Garay M.L."/>
            <person name="Garcia D.K."/>
            <person name="Gillett W."/>
            <person name="Gu J."/>
            <person name="Hao B."/>
            <person name="Haugen E."/>
            <person name="Havlak P."/>
            <person name="He X."/>
            <person name="Hennig S."/>
            <person name="Hu S."/>
            <person name="Huang W."/>
            <person name="Jackson L.R."/>
            <person name="Jacob L.S."/>
            <person name="Kelly S.H."/>
            <person name="Kube M."/>
            <person name="Levy R."/>
            <person name="Li Z."/>
            <person name="Liu B."/>
            <person name="Liu J."/>
            <person name="Liu W."/>
            <person name="Lu J."/>
            <person name="Maheshwari M."/>
            <person name="Nguyen B.-V."/>
            <person name="Okwuonu G.O."/>
            <person name="Palmeiri A."/>
            <person name="Pasternak S."/>
            <person name="Perez L.M."/>
            <person name="Phelps K.A."/>
            <person name="Plopper F.J."/>
            <person name="Qiang B."/>
            <person name="Raymond C."/>
            <person name="Rodriguez R."/>
            <person name="Saenphimmachak C."/>
            <person name="Santibanez J."/>
            <person name="Shen H."/>
            <person name="Shen Y."/>
            <person name="Subramanian S."/>
            <person name="Tabor P.E."/>
            <person name="Verduzco D."/>
            <person name="Waldron L."/>
            <person name="Wang J."/>
            <person name="Wang J."/>
            <person name="Wang Q."/>
            <person name="Williams G.A."/>
            <person name="Wong G.K.-S."/>
            <person name="Yao Z."/>
            <person name="Zhang J."/>
            <person name="Zhang X."/>
            <person name="Zhao G."/>
            <person name="Zhou J."/>
            <person name="Zhou Y."/>
            <person name="Nelson D."/>
            <person name="Lehrach H."/>
            <person name="Reinhardt R."/>
            <person name="Naylor S.L."/>
            <person name="Yang H."/>
            <person name="Olson M."/>
            <person name="Weinstock G."/>
            <person name="Gibbs R.A."/>
        </authorList>
    </citation>
    <scope>NUCLEOTIDE SEQUENCE [LARGE SCALE GENOMIC DNA]</scope>
</reference>
<reference key="3">
    <citation type="submission" date="2005-07" db="EMBL/GenBank/DDBJ databases">
        <authorList>
            <person name="Mural R.J."/>
            <person name="Istrail S."/>
            <person name="Sutton G.G."/>
            <person name="Florea L."/>
            <person name="Halpern A.L."/>
            <person name="Mobarry C.M."/>
            <person name="Lippert R."/>
            <person name="Walenz B."/>
            <person name="Shatkay H."/>
            <person name="Dew I."/>
            <person name="Miller J.R."/>
            <person name="Flanigan M.J."/>
            <person name="Edwards N.J."/>
            <person name="Bolanos R."/>
            <person name="Fasulo D."/>
            <person name="Halldorsson B.V."/>
            <person name="Hannenhalli S."/>
            <person name="Turner R."/>
            <person name="Yooseph S."/>
            <person name="Lu F."/>
            <person name="Nusskern D.R."/>
            <person name="Shue B.C."/>
            <person name="Zheng X.H."/>
            <person name="Zhong F."/>
            <person name="Delcher A.L."/>
            <person name="Huson D.H."/>
            <person name="Kravitz S.A."/>
            <person name="Mouchard L."/>
            <person name="Reinert K."/>
            <person name="Remington K.A."/>
            <person name="Clark A.G."/>
            <person name="Waterman M.S."/>
            <person name="Eichler E.E."/>
            <person name="Adams M.D."/>
            <person name="Hunkapiller M.W."/>
            <person name="Myers E.W."/>
            <person name="Venter J.C."/>
        </authorList>
    </citation>
    <scope>NUCLEOTIDE SEQUENCE [LARGE SCALE GENOMIC DNA]</scope>
</reference>
<reference key="4">
    <citation type="journal article" date="2004" name="Genome Res.">
        <title>The status, quality, and expansion of the NIH full-length cDNA project: the Mammalian Gene Collection (MGC).</title>
        <authorList>
            <consortium name="The MGC Project Team"/>
        </authorList>
    </citation>
    <scope>NUCLEOTIDE SEQUENCE [LARGE SCALE MRNA] (ISOFORM 1)</scope>
    <source>
        <tissue>Lung</tissue>
    </source>
</reference>
<dbReference type="EMBL" id="AK296046">
    <property type="protein sequence ID" value="BAG58810.1"/>
    <property type="molecule type" value="mRNA"/>
</dbReference>
<dbReference type="EMBL" id="AC092042">
    <property type="status" value="NOT_ANNOTATED_CDS"/>
    <property type="molecule type" value="Genomic_DNA"/>
</dbReference>
<dbReference type="EMBL" id="AC092043">
    <property type="status" value="NOT_ANNOTATED_CDS"/>
    <property type="molecule type" value="Genomic_DNA"/>
</dbReference>
<dbReference type="EMBL" id="AC099329">
    <property type="status" value="NOT_ANNOTATED_CDS"/>
    <property type="molecule type" value="Genomic_DNA"/>
</dbReference>
<dbReference type="EMBL" id="CH471055">
    <property type="protein sequence ID" value="EAW64686.1"/>
    <property type="molecule type" value="Genomic_DNA"/>
</dbReference>
<dbReference type="EMBL" id="BC062786">
    <property type="status" value="NOT_ANNOTATED_CDS"/>
    <property type="molecule type" value="mRNA"/>
</dbReference>
<dbReference type="CCDS" id="CCDS54572.1">
    <molecule id="C9JBD0-1"/>
</dbReference>
<dbReference type="RefSeq" id="NP_001192201.1">
    <molecule id="C9JBD0-1"/>
    <property type="nucleotide sequence ID" value="NM_001205272.2"/>
</dbReference>
<dbReference type="STRING" id="9606.ENSP00000388094"/>
<dbReference type="GlyGen" id="C9JBD0">
    <property type="glycosylation" value="1 site, 1 O-linked glycan (1 site)"/>
</dbReference>
<dbReference type="BioMuta" id="KRBOX1"/>
<dbReference type="jPOST" id="C9JBD0"/>
<dbReference type="MassIVE" id="C9JBD0"/>
<dbReference type="PaxDb" id="9606-ENSP00000388094"/>
<dbReference type="PeptideAtlas" id="C9JBD0"/>
<dbReference type="Antibodypedia" id="63086">
    <property type="antibodies" value="54 antibodies from 11 providers"/>
</dbReference>
<dbReference type="DNASU" id="100506243"/>
<dbReference type="Ensembl" id="ENST00000383748.9">
    <molecule id="C9JBD0-1"/>
    <property type="protein sequence ID" value="ENSP00000373254.5"/>
    <property type="gene ID" value="ENSG00000240747.9"/>
</dbReference>
<dbReference type="Ensembl" id="ENST00000418176.1">
    <molecule id="C9JBD0-1"/>
    <property type="protein sequence ID" value="ENSP00000388094.1"/>
    <property type="gene ID" value="ENSG00000240747.9"/>
</dbReference>
<dbReference type="GeneID" id="100506243"/>
<dbReference type="KEGG" id="hsa:100506243"/>
<dbReference type="MANE-Select" id="ENST00000383748.9">
    <property type="protein sequence ID" value="ENSP00000373254.5"/>
    <property type="RefSeq nucleotide sequence ID" value="NM_001205272.2"/>
    <property type="RefSeq protein sequence ID" value="NP_001192201.1"/>
</dbReference>
<dbReference type="UCSC" id="uc003cmm.5">
    <molecule id="C9JBD0-1"/>
    <property type="organism name" value="human"/>
</dbReference>
<dbReference type="AGR" id="HGNC:38708"/>
<dbReference type="CTD" id="100506243"/>
<dbReference type="GeneCards" id="KRBOX1"/>
<dbReference type="HGNC" id="HGNC:38708">
    <property type="gene designation" value="KRBOX1"/>
</dbReference>
<dbReference type="HPA" id="ENSG00000240747">
    <property type="expression patterns" value="Tissue enriched (testis)"/>
</dbReference>
<dbReference type="HPA" id="ENSG00000290317">
    <property type="expression patterns" value="Tissue enhanced (placenta)"/>
</dbReference>
<dbReference type="neXtProt" id="NX_C9JBD0"/>
<dbReference type="OpenTargets" id="ENSG00000240747"/>
<dbReference type="VEuPathDB" id="HostDB:ENSG00000240747"/>
<dbReference type="eggNOG" id="KOG1721">
    <property type="taxonomic scope" value="Eukaryota"/>
</dbReference>
<dbReference type="GeneTree" id="ENSGT00940000163819"/>
<dbReference type="HOGENOM" id="CLU_002678_69_10_1"/>
<dbReference type="InParanoid" id="C9JBD0"/>
<dbReference type="OMA" id="KESCFTR"/>
<dbReference type="PAN-GO" id="C9JBD0">
    <property type="GO annotations" value="0 GO annotations based on evolutionary models"/>
</dbReference>
<dbReference type="PhylomeDB" id="C9JBD0"/>
<dbReference type="TreeFam" id="TF342644"/>
<dbReference type="PathwayCommons" id="C9JBD0"/>
<dbReference type="BioGRID-ORCS" id="100506243">
    <property type="hits" value="8 hits in 1143 CRISPR screens"/>
</dbReference>
<dbReference type="ChiTaRS" id="KRBOX1">
    <property type="organism name" value="human"/>
</dbReference>
<dbReference type="GenomeRNAi" id="100506243"/>
<dbReference type="Pharos" id="C9JBD0">
    <property type="development level" value="Tdark"/>
</dbReference>
<dbReference type="PRO" id="PR:C9JBD0"/>
<dbReference type="Proteomes" id="UP000005640">
    <property type="component" value="Chromosome 3"/>
</dbReference>
<dbReference type="RNAct" id="C9JBD0">
    <property type="molecule type" value="protein"/>
</dbReference>
<dbReference type="Bgee" id="ENSG00000240747">
    <property type="expression patterns" value="Expressed in right testis and 96 other cell types or tissues"/>
</dbReference>
<dbReference type="ExpressionAtlas" id="C9JBD0">
    <property type="expression patterns" value="baseline and differential"/>
</dbReference>
<dbReference type="GO" id="GO:0006355">
    <property type="term" value="P:regulation of DNA-templated transcription"/>
    <property type="evidence" value="ECO:0007669"/>
    <property type="project" value="InterPro"/>
</dbReference>
<dbReference type="CDD" id="cd07765">
    <property type="entry name" value="KRAB_A-box"/>
    <property type="match status" value="1"/>
</dbReference>
<dbReference type="Gene3D" id="6.10.140.140">
    <property type="match status" value="1"/>
</dbReference>
<dbReference type="InterPro" id="IPR001909">
    <property type="entry name" value="KRAB"/>
</dbReference>
<dbReference type="InterPro" id="IPR036051">
    <property type="entry name" value="KRAB_dom_sf"/>
</dbReference>
<dbReference type="InterPro" id="IPR050169">
    <property type="entry name" value="Krueppel_C2H2_ZnF"/>
</dbReference>
<dbReference type="PANTHER" id="PTHR23232">
    <property type="entry name" value="KRAB DOMAIN C2H2 ZINC FINGER"/>
    <property type="match status" value="1"/>
</dbReference>
<dbReference type="PANTHER" id="PTHR23232:SF139">
    <property type="entry name" value="KRAB DOMAIN-CONTAINING PROTEIN 1"/>
    <property type="match status" value="1"/>
</dbReference>
<dbReference type="Pfam" id="PF01352">
    <property type="entry name" value="KRAB"/>
    <property type="match status" value="1"/>
</dbReference>
<dbReference type="SMART" id="SM00349">
    <property type="entry name" value="KRAB"/>
    <property type="match status" value="1"/>
</dbReference>
<dbReference type="SUPFAM" id="SSF109640">
    <property type="entry name" value="KRAB domain (Kruppel-associated box)"/>
    <property type="match status" value="1"/>
</dbReference>
<dbReference type="PROSITE" id="PS50805">
    <property type="entry name" value="KRAB"/>
    <property type="match status" value="1"/>
</dbReference>
<evidence type="ECO:0000255" key="1">
    <source>
        <dbReference type="PROSITE-ProRule" id="PRU00119"/>
    </source>
</evidence>
<evidence type="ECO:0000303" key="2">
    <source>
    </source>
</evidence>
<proteinExistence type="evidence at protein level"/>
<organism>
    <name type="scientific">Homo sapiens</name>
    <name type="common">Human</name>
    <dbReference type="NCBI Taxonomy" id="9606"/>
    <lineage>
        <taxon>Eukaryota</taxon>
        <taxon>Metazoa</taxon>
        <taxon>Chordata</taxon>
        <taxon>Craniata</taxon>
        <taxon>Vertebrata</taxon>
        <taxon>Euteleostomi</taxon>
        <taxon>Mammalia</taxon>
        <taxon>Eutheria</taxon>
        <taxon>Euarchontoglires</taxon>
        <taxon>Primates</taxon>
        <taxon>Haplorrhini</taxon>
        <taxon>Catarrhini</taxon>
        <taxon>Hominidae</taxon>
        <taxon>Homo</taxon>
    </lineage>
</organism>
<feature type="chain" id="PRO_0000404593" description="KRAB domain-containing protein 1">
    <location>
        <begin position="1"/>
        <end position="128"/>
    </location>
</feature>
<feature type="domain" description="KRAB" evidence="1">
    <location>
        <begin position="15"/>
        <end position="86"/>
    </location>
</feature>
<feature type="splice variant" id="VSP_040580" description="In isoform 2." evidence="2">
    <original>YLELRRYTYLAKAVLRRIVSKIFRNRQCWEDRRKA</original>
    <variation>PRPLGSLLLWLRA</variation>
    <location>
        <begin position="94"/>
        <end position="128"/>
    </location>
</feature>
<sequence length="128" mass="14906">MMTAVSLTTRPQESVAFEDVAVYFTTKEWAIMVPAERALYRDVMLENYEAVAFVVPPTSKPALVSHLEQGKESCFTQPQGVLSRNDWRAGWIGYLELRRYTYLAKAVLRRIVSKIFRNRQCWEDRRKA</sequence>